<name>CPCTL_NOSS1</name>
<gene>
    <name type="primary">cpcT2</name>
    <name type="synonym">cpeT2</name>
    <name type="ordered locus">alr0647</name>
</gene>
<organism>
    <name type="scientific">Nostoc sp. (strain PCC 7120 / SAG 25.82 / UTEX 2576)</name>
    <dbReference type="NCBI Taxonomy" id="103690"/>
    <lineage>
        <taxon>Bacteria</taxon>
        <taxon>Bacillati</taxon>
        <taxon>Cyanobacteriota</taxon>
        <taxon>Cyanophyceae</taxon>
        <taxon>Nostocales</taxon>
        <taxon>Nostocaceae</taxon>
        <taxon>Nostoc</taxon>
    </lineage>
</organism>
<proteinExistence type="evidence at transcript level"/>
<sequence length="198" mass="22396">MSFSPQLVNLGNYLAGEFDNREQALGEPIWFVHLRLWQRPVDLFSDDSITLFAEQANIVNLDRPYRQRILRLMPAPDSETGLYVQYYMPKNPSALIGAGRHPDLLKTLTPQQLELLPGCVLSVSQQTVAPNSYQFTASPLPNTCCTFSYLENTVQVSLGFAVTETELHTYDKGIDQETGKATWGAIVGPYRYTKREQY</sequence>
<keyword id="KW-0456">Lyase</keyword>
<keyword id="KW-1185">Reference proteome</keyword>
<protein>
    <recommendedName>
        <fullName>Phycocyanobilin lyase CpcT homolog</fullName>
    </recommendedName>
</protein>
<reference key="1">
    <citation type="journal article" date="2001" name="DNA Res.">
        <title>Complete genomic sequence of the filamentous nitrogen-fixing cyanobacterium Anabaena sp. strain PCC 7120.</title>
        <authorList>
            <person name="Kaneko T."/>
            <person name="Nakamura Y."/>
            <person name="Wolk C.P."/>
            <person name="Kuritz T."/>
            <person name="Sasamoto S."/>
            <person name="Watanabe A."/>
            <person name="Iriguchi M."/>
            <person name="Ishikawa A."/>
            <person name="Kawashima K."/>
            <person name="Kimura T."/>
            <person name="Kishida Y."/>
            <person name="Kohara M."/>
            <person name="Matsumoto M."/>
            <person name="Matsuno A."/>
            <person name="Muraki A."/>
            <person name="Nakazaki N."/>
            <person name="Shimpo S."/>
            <person name="Sugimoto M."/>
            <person name="Takazawa M."/>
            <person name="Yamada M."/>
            <person name="Yasuda M."/>
            <person name="Tabata S."/>
        </authorList>
    </citation>
    <scope>NUCLEOTIDE SEQUENCE [LARGE SCALE GENOMIC DNA]</scope>
    <source>
        <strain>PCC 7120 / SAG 25.82 / UTEX 2576</strain>
    </source>
</reference>
<reference key="2">
    <citation type="journal article" date="2007" name="J. Biol. Chem.">
        <title>Lyase activities of CpcS- and CpcT-like proteins from Nostoc PCC7120 and sequential reconstitution of binding sites of phycoerythrocyanin and phycocyanin beta-subunits.</title>
        <authorList>
            <person name="Zhao K.H."/>
            <person name="Zhang J."/>
            <person name="Tu J.M."/>
            <person name="Bohm S."/>
            <person name="Ploscher M."/>
            <person name="Eichacker L."/>
            <person name="Bubenzer C."/>
            <person name="Scheer H."/>
            <person name="Wang X."/>
            <person name="Zhou M."/>
        </authorList>
    </citation>
    <scope>INDUCTION</scope>
    <scope>FUNCTION</scope>
    <scope>LACK OF CHROMOPHORE LYASE ACTIVITY IN VITRO</scope>
    <source>
        <strain>PCC 7120 / SAG 25.82 / UTEX 2576</strain>
    </source>
</reference>
<reference key="3">
    <citation type="journal article" date="2007" name="Proc. Natl. Acad. Sci. U.S.A.">
        <title>Phycobilin:cystein-84 biliprotein lyase, a near-universal lyase for cysteine-84-binding sites in cyanobacterial phycobiliproteins.</title>
        <authorList>
            <person name="Zhao K.H."/>
            <person name="Su P."/>
            <person name="Tu J.M."/>
            <person name="Wang X."/>
            <person name="Liu H."/>
            <person name="Ploscher M."/>
            <person name="Eichacker L."/>
            <person name="Yang B."/>
            <person name="Zhou M."/>
            <person name="Scheer H."/>
        </authorList>
    </citation>
    <scope>FUNCTION</scope>
    <scope>LACK OF CHROMOPHORE LYASE ACTIVITY IN VITRO</scope>
    <source>
        <strain>PCC 7120 / SAG 25.82 / UTEX 2576</strain>
    </source>
</reference>
<evidence type="ECO:0000250" key="1"/>
<evidence type="ECO:0000269" key="2">
    <source>
    </source>
</evidence>
<evidence type="ECO:0000269" key="3">
    <source>
    </source>
</evidence>
<evidence type="ECO:0000305" key="4"/>
<feature type="chain" id="PRO_0000403161" description="Phycocyanobilin lyase CpcT homolog">
    <location>
        <begin position="1"/>
        <end position="198"/>
    </location>
</feature>
<comment type="function">
    <text evidence="1 2 3">Covalently attaches a chromophore to Cys residue(s) of phycobiliproteins (By similarity). In vitro is not seen to act as a chromophore lyase for ApcA1, ApcA2, ApcB, ApcD, ApcF, CpcB or PecB, the lyase activity is therefore unsure.</text>
</comment>
<comment type="induction">
    <text evidence="3">Induced by nitrogen starvation.</text>
</comment>
<comment type="similarity">
    <text evidence="4">Belongs to the CpcT/CpeT biliprotein lyase family.</text>
</comment>
<accession>Q8YZ40</accession>
<dbReference type="EMBL" id="BA000019">
    <property type="protein sequence ID" value="BAB72605.1"/>
    <property type="molecule type" value="Genomic_DNA"/>
</dbReference>
<dbReference type="PIR" id="AF1887">
    <property type="entry name" value="AF1887"/>
</dbReference>
<dbReference type="RefSeq" id="WP_010994823.1">
    <property type="nucleotide sequence ID" value="NZ_RSCN01000009.1"/>
</dbReference>
<dbReference type="SMR" id="Q8YZ40"/>
<dbReference type="STRING" id="103690.gene:10492658"/>
<dbReference type="KEGG" id="ana:alr0647"/>
<dbReference type="eggNOG" id="ENOG502ZC00">
    <property type="taxonomic scope" value="Bacteria"/>
</dbReference>
<dbReference type="OrthoDB" id="509174at2"/>
<dbReference type="Proteomes" id="UP000002483">
    <property type="component" value="Chromosome"/>
</dbReference>
<dbReference type="GO" id="GO:0016829">
    <property type="term" value="F:lyase activity"/>
    <property type="evidence" value="ECO:0007669"/>
    <property type="project" value="UniProtKB-KW"/>
</dbReference>
<dbReference type="CDD" id="cd16338">
    <property type="entry name" value="CpcT"/>
    <property type="match status" value="1"/>
</dbReference>
<dbReference type="Gene3D" id="2.40.128.590">
    <property type="entry name" value="CpcT/CpeT domain"/>
    <property type="match status" value="1"/>
</dbReference>
<dbReference type="HAMAP" id="MF_01460">
    <property type="entry name" value="Chrphore_lyase_CpxT"/>
    <property type="match status" value="1"/>
</dbReference>
<dbReference type="InterPro" id="IPR010404">
    <property type="entry name" value="CpcT/CpeT"/>
</dbReference>
<dbReference type="InterPro" id="IPR038672">
    <property type="entry name" value="CpcT/CpeT_sf"/>
</dbReference>
<dbReference type="PANTHER" id="PTHR35137">
    <property type="entry name" value="CHROMOPHORE LYASE CRL, CHLOROPLASTIC"/>
    <property type="match status" value="1"/>
</dbReference>
<dbReference type="PANTHER" id="PTHR35137:SF1">
    <property type="entry name" value="CHROMOPHORE LYASE CRL, CHLOROPLASTIC"/>
    <property type="match status" value="1"/>
</dbReference>
<dbReference type="Pfam" id="PF06206">
    <property type="entry name" value="CpeT"/>
    <property type="match status" value="1"/>
</dbReference>